<protein>
    <recommendedName>
        <fullName>Uncharacterized protein C191.10</fullName>
    </recommendedName>
</protein>
<name>YQ6A_SCHPO</name>
<gene>
    <name type="ORF">SPCC191.10</name>
</gene>
<accession>Q9Y7Q3</accession>
<keyword id="KW-1185">Reference proteome</keyword>
<organism>
    <name type="scientific">Schizosaccharomyces pombe (strain 972 / ATCC 24843)</name>
    <name type="common">Fission yeast</name>
    <dbReference type="NCBI Taxonomy" id="284812"/>
    <lineage>
        <taxon>Eukaryota</taxon>
        <taxon>Fungi</taxon>
        <taxon>Dikarya</taxon>
        <taxon>Ascomycota</taxon>
        <taxon>Taphrinomycotina</taxon>
        <taxon>Schizosaccharomycetes</taxon>
        <taxon>Schizosaccharomycetales</taxon>
        <taxon>Schizosaccharomycetaceae</taxon>
        <taxon>Schizosaccharomyces</taxon>
    </lineage>
</organism>
<proteinExistence type="predicted"/>
<sequence length="149" mass="17309">MHSSRRKYNDMWTARLLIRSDQKEEKYPSFKKNAGKAINAHLIPKLSPKMNIMRSSCGRQEISQFQTKIRLFFLPHSCGVNDVTDLGGKDDELVGKRKKWKTEVRIETSMAECNGGKDFTEMTRIYLSIRKNFFQICLKTHSPQLPLGR</sequence>
<feature type="chain" id="PRO_0000116885" description="Uncharacterized protein C191.10">
    <location>
        <begin position="1"/>
        <end position="149"/>
    </location>
</feature>
<reference key="1">
    <citation type="journal article" date="2002" name="Nature">
        <title>The genome sequence of Schizosaccharomyces pombe.</title>
        <authorList>
            <person name="Wood V."/>
            <person name="Gwilliam R."/>
            <person name="Rajandream M.A."/>
            <person name="Lyne M.H."/>
            <person name="Lyne R."/>
            <person name="Stewart A."/>
            <person name="Sgouros J.G."/>
            <person name="Peat N."/>
            <person name="Hayles J."/>
            <person name="Baker S.G."/>
            <person name="Basham D."/>
            <person name="Bowman S."/>
            <person name="Brooks K."/>
            <person name="Brown D."/>
            <person name="Brown S."/>
            <person name="Chillingworth T."/>
            <person name="Churcher C.M."/>
            <person name="Collins M."/>
            <person name="Connor R."/>
            <person name="Cronin A."/>
            <person name="Davis P."/>
            <person name="Feltwell T."/>
            <person name="Fraser A."/>
            <person name="Gentles S."/>
            <person name="Goble A."/>
            <person name="Hamlin N."/>
            <person name="Harris D.E."/>
            <person name="Hidalgo J."/>
            <person name="Hodgson G."/>
            <person name="Holroyd S."/>
            <person name="Hornsby T."/>
            <person name="Howarth S."/>
            <person name="Huckle E.J."/>
            <person name="Hunt S."/>
            <person name="Jagels K."/>
            <person name="James K.D."/>
            <person name="Jones L."/>
            <person name="Jones M."/>
            <person name="Leather S."/>
            <person name="McDonald S."/>
            <person name="McLean J."/>
            <person name="Mooney P."/>
            <person name="Moule S."/>
            <person name="Mungall K.L."/>
            <person name="Murphy L.D."/>
            <person name="Niblett D."/>
            <person name="Odell C."/>
            <person name="Oliver K."/>
            <person name="O'Neil S."/>
            <person name="Pearson D."/>
            <person name="Quail M.A."/>
            <person name="Rabbinowitsch E."/>
            <person name="Rutherford K.M."/>
            <person name="Rutter S."/>
            <person name="Saunders D."/>
            <person name="Seeger K."/>
            <person name="Sharp S."/>
            <person name="Skelton J."/>
            <person name="Simmonds M.N."/>
            <person name="Squares R."/>
            <person name="Squares S."/>
            <person name="Stevens K."/>
            <person name="Taylor K."/>
            <person name="Taylor R.G."/>
            <person name="Tivey A."/>
            <person name="Walsh S.V."/>
            <person name="Warren T."/>
            <person name="Whitehead S."/>
            <person name="Woodward J.R."/>
            <person name="Volckaert G."/>
            <person name="Aert R."/>
            <person name="Robben J."/>
            <person name="Grymonprez B."/>
            <person name="Weltjens I."/>
            <person name="Vanstreels E."/>
            <person name="Rieger M."/>
            <person name="Schaefer M."/>
            <person name="Mueller-Auer S."/>
            <person name="Gabel C."/>
            <person name="Fuchs M."/>
            <person name="Duesterhoeft A."/>
            <person name="Fritzc C."/>
            <person name="Holzer E."/>
            <person name="Moestl D."/>
            <person name="Hilbert H."/>
            <person name="Borzym K."/>
            <person name="Langer I."/>
            <person name="Beck A."/>
            <person name="Lehrach H."/>
            <person name="Reinhardt R."/>
            <person name="Pohl T.M."/>
            <person name="Eger P."/>
            <person name="Zimmermann W."/>
            <person name="Wedler H."/>
            <person name="Wambutt R."/>
            <person name="Purnelle B."/>
            <person name="Goffeau A."/>
            <person name="Cadieu E."/>
            <person name="Dreano S."/>
            <person name="Gloux S."/>
            <person name="Lelaure V."/>
            <person name="Mottier S."/>
            <person name="Galibert F."/>
            <person name="Aves S.J."/>
            <person name="Xiang Z."/>
            <person name="Hunt C."/>
            <person name="Moore K."/>
            <person name="Hurst S.M."/>
            <person name="Lucas M."/>
            <person name="Rochet M."/>
            <person name="Gaillardin C."/>
            <person name="Tallada V.A."/>
            <person name="Garzon A."/>
            <person name="Thode G."/>
            <person name="Daga R.R."/>
            <person name="Cruzado L."/>
            <person name="Jimenez J."/>
            <person name="Sanchez M."/>
            <person name="del Rey F."/>
            <person name="Benito J."/>
            <person name="Dominguez A."/>
            <person name="Revuelta J.L."/>
            <person name="Moreno S."/>
            <person name="Armstrong J."/>
            <person name="Forsburg S.L."/>
            <person name="Cerutti L."/>
            <person name="Lowe T."/>
            <person name="McCombie W.R."/>
            <person name="Paulsen I."/>
            <person name="Potashkin J."/>
            <person name="Shpakovski G.V."/>
            <person name="Ussery D."/>
            <person name="Barrell B.G."/>
            <person name="Nurse P."/>
        </authorList>
    </citation>
    <scope>NUCLEOTIDE SEQUENCE [LARGE SCALE GENOMIC DNA]</scope>
    <source>
        <strain>972 / ATCC 24843</strain>
    </source>
</reference>
<dbReference type="EMBL" id="CU329672">
    <property type="protein sequence ID" value="CAB41056.1"/>
    <property type="molecule type" value="Genomic_DNA"/>
</dbReference>
<dbReference type="PIR" id="T41223">
    <property type="entry name" value="T41223"/>
</dbReference>
<dbReference type="RefSeq" id="NP_588299.1">
    <property type="nucleotide sequence ID" value="NM_001023289.2"/>
</dbReference>
<dbReference type="STRING" id="284812.Q9Y7Q3"/>
<dbReference type="PaxDb" id="4896-SPCC191.10.1"/>
<dbReference type="EnsemblFungi" id="SPCC191.10.1">
    <property type="protein sequence ID" value="SPCC191.10.1:pep"/>
    <property type="gene ID" value="SPCC191.10"/>
</dbReference>
<dbReference type="KEGG" id="spo:2538831"/>
<dbReference type="PomBase" id="SPCC191.10"/>
<dbReference type="VEuPathDB" id="FungiDB:SPCC191.10"/>
<dbReference type="HOGENOM" id="CLU_1750752_0_0_1"/>
<dbReference type="InParanoid" id="Q9Y7Q3"/>
<dbReference type="PRO" id="PR:Q9Y7Q3"/>
<dbReference type="Proteomes" id="UP000002485">
    <property type="component" value="Chromosome III"/>
</dbReference>
<dbReference type="GO" id="GO:0005829">
    <property type="term" value="C:cytosol"/>
    <property type="evidence" value="ECO:0007005"/>
    <property type="project" value="PomBase"/>
</dbReference>
<dbReference type="GO" id="GO:0005739">
    <property type="term" value="C:mitochondrion"/>
    <property type="evidence" value="ECO:0007005"/>
    <property type="project" value="PomBase"/>
</dbReference>
<dbReference type="GO" id="GO:0005634">
    <property type="term" value="C:nucleus"/>
    <property type="evidence" value="ECO:0007005"/>
    <property type="project" value="PomBase"/>
</dbReference>